<dbReference type="EMBL" id="DQ022675">
    <property type="protein sequence ID" value="AAY44401.1"/>
    <property type="molecule type" value="mRNA"/>
</dbReference>
<dbReference type="SMR" id="Q4U0F3"/>
<dbReference type="Proteomes" id="UP000694520">
    <property type="component" value="Unplaced"/>
</dbReference>
<dbReference type="GO" id="GO:0005813">
    <property type="term" value="C:centrosome"/>
    <property type="evidence" value="ECO:0000250"/>
    <property type="project" value="UniProtKB"/>
</dbReference>
<dbReference type="GO" id="GO:0005737">
    <property type="term" value="C:cytoplasm"/>
    <property type="evidence" value="ECO:0007669"/>
    <property type="project" value="UniProtKB-SubCell"/>
</dbReference>
<dbReference type="GO" id="GO:0005524">
    <property type="term" value="F:ATP binding"/>
    <property type="evidence" value="ECO:0007669"/>
    <property type="project" value="UniProtKB-KW"/>
</dbReference>
<dbReference type="GO" id="GO:0140662">
    <property type="term" value="F:ATP-dependent protein folding chaperone"/>
    <property type="evidence" value="ECO:0007669"/>
    <property type="project" value="InterPro"/>
</dbReference>
<dbReference type="GO" id="GO:0090063">
    <property type="term" value="P:positive regulation of microtubule nucleation"/>
    <property type="evidence" value="ECO:0000250"/>
    <property type="project" value="UniProtKB"/>
</dbReference>
<dbReference type="GO" id="GO:0042026">
    <property type="term" value="P:protein refolding"/>
    <property type="evidence" value="ECO:0000250"/>
    <property type="project" value="UniProtKB"/>
</dbReference>
<dbReference type="GO" id="GO:1901673">
    <property type="term" value="P:regulation of mitotic spindle assembly"/>
    <property type="evidence" value="ECO:0000250"/>
    <property type="project" value="UniProtKB"/>
</dbReference>
<dbReference type="CDD" id="cd10233">
    <property type="entry name" value="ASKHA_NBD_HSP70_HSPA1"/>
    <property type="match status" value="1"/>
</dbReference>
<dbReference type="FunFam" id="2.60.34.10:FF:000002">
    <property type="entry name" value="Heat shock 70 kDa"/>
    <property type="match status" value="1"/>
</dbReference>
<dbReference type="FunFam" id="3.30.420.40:FF:000172">
    <property type="entry name" value="Heat shock 70 kDa protein"/>
    <property type="match status" value="1"/>
</dbReference>
<dbReference type="FunFam" id="3.30.30.30:FF:000001">
    <property type="entry name" value="heat shock 70 kDa protein-like"/>
    <property type="match status" value="1"/>
</dbReference>
<dbReference type="FunFam" id="3.30.420.40:FF:000028">
    <property type="entry name" value="heat shock 70 kDa protein-like"/>
    <property type="match status" value="1"/>
</dbReference>
<dbReference type="FunFam" id="3.30.420.40:FF:000135">
    <property type="entry name" value="Heat shock cognate 71 kDa protein"/>
    <property type="match status" value="1"/>
</dbReference>
<dbReference type="FunFam" id="3.90.640.10:FF:000134">
    <property type="entry name" value="Heat shock cognate 71 kDa protein"/>
    <property type="match status" value="1"/>
</dbReference>
<dbReference type="FunFam" id="1.20.1270.10:FF:000003">
    <property type="entry name" value="heat shock cognate 71 kDa protein-like"/>
    <property type="match status" value="1"/>
</dbReference>
<dbReference type="FunFam" id="3.30.420.40:FF:000026">
    <property type="entry name" value="Heat shock protein 70"/>
    <property type="match status" value="1"/>
</dbReference>
<dbReference type="Gene3D" id="1.20.1270.10">
    <property type="match status" value="1"/>
</dbReference>
<dbReference type="Gene3D" id="3.30.30.30">
    <property type="match status" value="1"/>
</dbReference>
<dbReference type="Gene3D" id="3.30.420.40">
    <property type="match status" value="2"/>
</dbReference>
<dbReference type="Gene3D" id="3.90.640.10">
    <property type="entry name" value="Actin, Chain A, domain 4"/>
    <property type="match status" value="1"/>
</dbReference>
<dbReference type="Gene3D" id="2.60.34.10">
    <property type="entry name" value="Substrate Binding Domain Of DNAk, Chain A, domain 1"/>
    <property type="match status" value="1"/>
</dbReference>
<dbReference type="InterPro" id="IPR043129">
    <property type="entry name" value="ATPase_NBD"/>
</dbReference>
<dbReference type="InterPro" id="IPR018181">
    <property type="entry name" value="Heat_shock_70_CS"/>
</dbReference>
<dbReference type="InterPro" id="IPR029048">
    <property type="entry name" value="HSP70_C_sf"/>
</dbReference>
<dbReference type="InterPro" id="IPR029047">
    <property type="entry name" value="HSP70_peptide-bd_sf"/>
</dbReference>
<dbReference type="InterPro" id="IPR013126">
    <property type="entry name" value="Hsp_70_fam"/>
</dbReference>
<dbReference type="NCBIfam" id="NF001413">
    <property type="entry name" value="PRK00290.1"/>
    <property type="match status" value="1"/>
</dbReference>
<dbReference type="PANTHER" id="PTHR19375">
    <property type="entry name" value="HEAT SHOCK PROTEIN 70KDA"/>
    <property type="match status" value="1"/>
</dbReference>
<dbReference type="Pfam" id="PF00012">
    <property type="entry name" value="HSP70"/>
    <property type="match status" value="1"/>
</dbReference>
<dbReference type="PRINTS" id="PR00301">
    <property type="entry name" value="HEATSHOCK70"/>
</dbReference>
<dbReference type="SUPFAM" id="SSF53067">
    <property type="entry name" value="Actin-like ATPase domain"/>
    <property type="match status" value="2"/>
</dbReference>
<dbReference type="SUPFAM" id="SSF100934">
    <property type="entry name" value="Heat shock protein 70kD (HSP70), C-terminal subdomain"/>
    <property type="match status" value="1"/>
</dbReference>
<dbReference type="SUPFAM" id="SSF100920">
    <property type="entry name" value="Heat shock protein 70kD (HSP70), peptide-binding domain"/>
    <property type="match status" value="1"/>
</dbReference>
<dbReference type="PROSITE" id="PS00297">
    <property type="entry name" value="HSP70_1"/>
    <property type="match status" value="1"/>
</dbReference>
<dbReference type="PROSITE" id="PS00329">
    <property type="entry name" value="HSP70_2"/>
    <property type="match status" value="1"/>
</dbReference>
<dbReference type="PROSITE" id="PS01036">
    <property type="entry name" value="HSP70_3"/>
    <property type="match status" value="1"/>
</dbReference>
<accession>Q4U0F3</accession>
<name>HS71B_BOSMU</name>
<evidence type="ECO:0000250" key="1"/>
<evidence type="ECO:0000250" key="2">
    <source>
        <dbReference type="UniProtKB" id="P0DMV9"/>
    </source>
</evidence>
<evidence type="ECO:0000250" key="3">
    <source>
        <dbReference type="UniProtKB" id="P11142"/>
    </source>
</evidence>
<evidence type="ECO:0000256" key="4">
    <source>
        <dbReference type="SAM" id="MobiDB-lite"/>
    </source>
</evidence>
<evidence type="ECO:0000305" key="5"/>
<gene>
    <name type="primary">HSPA1B</name>
</gene>
<keyword id="KW-0007">Acetylation</keyword>
<keyword id="KW-0067">ATP-binding</keyword>
<keyword id="KW-0143">Chaperone</keyword>
<keyword id="KW-0963">Cytoplasm</keyword>
<keyword id="KW-0206">Cytoskeleton</keyword>
<keyword id="KW-0488">Methylation</keyword>
<keyword id="KW-0547">Nucleotide-binding</keyword>
<keyword id="KW-0597">Phosphoprotein</keyword>
<keyword id="KW-1185">Reference proteome</keyword>
<keyword id="KW-0346">Stress response</keyword>
<proteinExistence type="evidence at transcript level"/>
<sequence length="641" mass="70253">MAKNTAIGIDLGTTYSCVGVFQHGKVEIIANDQGNRTTPSYVAFTDTERLIGDAAKNQVALNPQNTVFDAKRLIGRKFGDPVVQSDMKHWPFRVINDGDKPKVQVSYKGETKAFYPEEISSMVLTKMKEIAEAYLGHPVTNAVITVPAYFNDSQRQATKDAGVIAGLNVLRIINEPTAAAIAYGLDRTGKGERNVLIFDLGGGTFDVSILTIDDGIFEVEATAGDTHLGGEDFDNRLVNHFVEEFKRKHKKDISQNKRAVRRLRTACERAKRTLSSSTQASLEIDSLFEGIDFYTSITRARFEELCSDLFRSTLEPVEKALRDAKLDKAQIHDLVLVGGSTRIPKVQKLLQDFFNGRDLNKSINPDEAVAYGAAVQAAILMGDKSENVQDLLLLDVAPLSLGLETAGGVMTALIKRNSTIPTKQTQIFTTYSDNQPGVLIQVYEGERAMTRDNNLLGRFELSGIPPAPRGVPQIEVTFDIDANGILNVTATDKSTGKANKITITNDKGRLSKEEIERMVQEAEKYKAEDEVQRERVSAKNALESYAFNMKSAVEDEGLKGKISEADKKKVLDKCQEVISWLDANTLAEKDEFEHKRKELEQVCNPIISRLYQGAGGPGAGGFGAQAPKGGSGPGPTIEEVD</sequence>
<reference key="1">
    <citation type="submission" date="2005-04" db="EMBL/GenBank/DDBJ databases">
        <authorList>
            <person name="Xiao Z."/>
            <person name="Jincheng Z."/>
            <person name="Sheng Z."/>
            <person name="Qin Z."/>
            <person name="Kai H."/>
        </authorList>
    </citation>
    <scope>NUCLEOTIDE SEQUENCE [MRNA]</scope>
</reference>
<comment type="function">
    <text evidence="2">Molecular chaperone implicated in a wide variety of cellular processes, including protection of the proteome from stress, folding and transport of newly synthesized polypeptides, activation of proteolysis of misfolded proteins and the formation and dissociation of protein complexes. Plays a pivotal role in the protein quality control system, ensuring the correct folding of proteins, the re-folding of misfolded proteins and controlling the targeting of proteins for subsequent degradation. This is achieved through cycles of ATP binding, ATP hydrolysis and ADP release, mediated by co-chaperones. The co-chaperones have been shown to not only regulate different steps of the ATPase cycle, but they also have an individual specificity such that one co-chaperone may promote folding of a substrate while another may promote degradation. The affinity for polypeptides is regulated by its nucleotide bound state. In the ATP-bound form, it has a low affinity for substrate proteins. However, upon hydrolysis of the ATP to ADP, it undergoes a conformational change that increases its affinity for substrate proteins. It goes through repeated cycles of ATP hydrolysis and nucleotide exchange, which permits cycles of substrate binding and release. The co-chaperones are of three types: J-domain co-chaperones such as HSP40s (stimulate ATPase hydrolysis by HSP70), the nucleotide exchange factors (NEF) such as BAG1/2/3 (facilitate conversion of HSP70 from the ADP-bound to the ATP-bound state thereby promoting substrate release), and the TPR domain chaperones such as HOPX and STUB1. Maintains protein homeostasis during cellular stress through two opposing mechanisms: protein refolding and degradation. Its acetylation/deacetylation state determines whether it functions in protein refolding or protein degradation by controlling the competitive binding of co-chaperones HOPX and STUB1. During the early stress response, the acetylated form binds to HOPX which assists in chaperone-mediated protein refolding, thereafter, it is deacetylated and binds to ubiquitin ligase STUB1 that promotes ubiquitin-mediated protein degradation. Regulates centrosome integrity during mitosis, and is required for the maintenance of a functional mitotic centrosome that supports the assembly of a bipolar mitotic spindle. Enhances STUB1-mediated SMAD3 ubiquitination and degradation and facilitates STUB1-mediated inhibition of TGF-beta signaling. Essential for STUB1-mediated ubiquitination and degradation of FOXP3 in regulatory T-cells (Treg) during inflammation.</text>
</comment>
<comment type="subunit">
    <text evidence="2">May be an auxiliary component of the CatSper complex. Identified in a IGF2BP1-dependent mRNP granule complex containing untranslated mRNAs. Interacts with CHCHD3, DNAJC7, IRAK1BP1, PPP5C and TSC2. Interacts with TERT; the interaction occurs in the absence of the RNA component, TERC, and dissociates once the TERT complex has formed. Interacts with METTL21A. Interacts with TRIM5 (via B30.2/SPRY domain). Interacts with PRKN. Interacts with FOXP3. Interacts with NOD2; the interaction enhances NOD2 stability. Interacts with DNAJC9 (via J domain). Interacts with ATF5; the interaction protects ATF5 from degradation via proteasome-dependent and caspase-dependent processes. Interacts with NAA10, HSP40, HSP90 and HDAC4. The acetylated form and the non-acetylated form interact with HOPX and STUB1 respectively. Interacts with NEDD1 and SMAD3. Interacts (via NBD) with BAG1, BAG2, BAG3 and HSPH1/HSP105. Interacts with DNAJC8.</text>
</comment>
<comment type="subcellular location">
    <subcellularLocation>
        <location evidence="2">Cytoplasm</location>
    </subcellularLocation>
    <subcellularLocation>
        <location evidence="2">Cytoplasm</location>
        <location evidence="2">Cytoskeleton</location>
        <location evidence="2">Microtubule organizing center</location>
        <location evidence="2">Centrosome</location>
    </subcellularLocation>
    <text evidence="2">Localized in cytoplasmic mRNP granules containing untranslated mRNAs.</text>
</comment>
<comment type="tissue specificity">
    <text>Testis-specific.</text>
</comment>
<comment type="induction">
    <text>By heat shock.</text>
</comment>
<comment type="domain">
    <text evidence="2">The N-terminal nucleotide binding domain (NBD) (also known as the ATPase domain) is responsible for binding and hydrolyzing ATP. The C-terminal substrate-binding domain (SBD) (also known as peptide-binding domain) binds to the client/substrate proteins. The two domains are allosterically coupled so that, when ATP is bound to the NBD, the SBD binds relatively weakly to clients. When ADP is bound in the NBD, a conformational change enhances the affinity of the SBD for client proteins.</text>
</comment>
<comment type="PTM">
    <text evidence="2">In response to cellular stress, acetylated at Lys-77 by NA110 and then gradually deacetylated by HDAC4 at later stages. Acetylation enhances its chaperone activity and also determines whether it will function as a chaperone for protein refolding or degradation by controlling its binding to co-chaperones HOPX and STUB1. The acetylated form and the non-acetylated form bind to HOPX and STUB1 respectively. Acetylation also protects cells against various types of cellular stress.</text>
</comment>
<comment type="similarity">
    <text evidence="5">Belongs to the heat shock protein 70 family.</text>
</comment>
<organism>
    <name type="scientific">Bos mutus grunniens</name>
    <name type="common">Wild yak</name>
    <name type="synonym">Bos grunniens</name>
    <dbReference type="NCBI Taxonomy" id="30521"/>
    <lineage>
        <taxon>Eukaryota</taxon>
        <taxon>Metazoa</taxon>
        <taxon>Chordata</taxon>
        <taxon>Craniata</taxon>
        <taxon>Vertebrata</taxon>
        <taxon>Euteleostomi</taxon>
        <taxon>Mammalia</taxon>
        <taxon>Eutheria</taxon>
        <taxon>Laurasiatheria</taxon>
        <taxon>Artiodactyla</taxon>
        <taxon>Ruminantia</taxon>
        <taxon>Pecora</taxon>
        <taxon>Bovidae</taxon>
        <taxon>Bovinae</taxon>
        <taxon>Bos</taxon>
    </lineage>
</organism>
<protein>
    <recommendedName>
        <fullName>Heat shock 70 kDa protein 1B</fullName>
    </recommendedName>
    <alternativeName>
        <fullName>Heat shock 70 kDa protein 2</fullName>
        <shortName>HSP70.2</shortName>
    </alternativeName>
</protein>
<feature type="initiator methionine" description="Removed" evidence="2">
    <location>
        <position position="1"/>
    </location>
</feature>
<feature type="chain" id="PRO_0000253498" description="Heat shock 70 kDa protein 1B">
    <location>
        <begin position="2"/>
        <end position="641"/>
    </location>
</feature>
<feature type="region of interest" description="Nucleotide-binding domain (NBD)" evidence="3">
    <location>
        <begin position="2"/>
        <end position="386"/>
    </location>
</feature>
<feature type="region of interest" description="Substrate-binding domain (SBD)" evidence="3">
    <location>
        <begin position="394"/>
        <end position="509"/>
    </location>
</feature>
<feature type="region of interest" description="Disordered" evidence="4">
    <location>
        <begin position="617"/>
        <end position="641"/>
    </location>
</feature>
<feature type="compositionally biased region" description="Gly residues" evidence="4">
    <location>
        <begin position="617"/>
        <end position="633"/>
    </location>
</feature>
<feature type="binding site" evidence="1">
    <location>
        <begin position="12"/>
        <end position="15"/>
    </location>
    <ligand>
        <name>ATP</name>
        <dbReference type="ChEBI" id="CHEBI:30616"/>
    </ligand>
</feature>
<feature type="binding site" evidence="1">
    <location>
        <position position="71"/>
    </location>
    <ligand>
        <name>ATP</name>
        <dbReference type="ChEBI" id="CHEBI:30616"/>
    </ligand>
</feature>
<feature type="binding site" evidence="1">
    <location>
        <begin position="202"/>
        <end position="204"/>
    </location>
    <ligand>
        <name>ATP</name>
        <dbReference type="ChEBI" id="CHEBI:30616"/>
    </ligand>
</feature>
<feature type="binding site" evidence="1">
    <location>
        <begin position="268"/>
        <end position="275"/>
    </location>
    <ligand>
        <name>ATP</name>
        <dbReference type="ChEBI" id="CHEBI:30616"/>
    </ligand>
</feature>
<feature type="binding site" evidence="1">
    <location>
        <begin position="339"/>
        <end position="342"/>
    </location>
    <ligand>
        <name>ATP</name>
        <dbReference type="ChEBI" id="CHEBI:30616"/>
    </ligand>
</feature>
<feature type="modified residue" description="N-acetylalanine" evidence="2">
    <location>
        <position position="2"/>
    </location>
</feature>
<feature type="modified residue" description="N6-acetyllysine" evidence="2">
    <location>
        <position position="77"/>
    </location>
</feature>
<feature type="modified residue" description="N6-acetyllysine" evidence="2">
    <location>
        <position position="108"/>
    </location>
</feature>
<feature type="modified residue" description="N6-acetyllysine" evidence="2">
    <location>
        <position position="246"/>
    </location>
</feature>
<feature type="modified residue" description="N6-acetyllysine" evidence="2">
    <location>
        <position position="348"/>
    </location>
</feature>
<feature type="modified residue" description="Omega-N-methylarginine" evidence="2">
    <location>
        <position position="469"/>
    </location>
</feature>
<feature type="modified residue" description="N6,N6,N6-trimethyllysine; by METTL21A; in vitro" evidence="2">
    <location>
        <position position="561"/>
    </location>
</feature>
<feature type="modified residue" description="N6,N6-dimethyllysine" evidence="2">
    <location>
        <position position="561"/>
    </location>
</feature>
<feature type="modified residue" description="Phosphoserine" evidence="2">
    <location>
        <position position="631"/>
    </location>
</feature>
<feature type="modified residue" description="Phosphothreonine" evidence="2">
    <location>
        <position position="636"/>
    </location>
</feature>